<accession>Q5L0F4</accession>
<evidence type="ECO:0000255" key="1">
    <source>
        <dbReference type="HAMAP-Rule" id="MF_00335"/>
    </source>
</evidence>
<evidence type="ECO:0000255" key="2">
    <source>
        <dbReference type="PROSITE-ProRule" id="PRU01175"/>
    </source>
</evidence>
<gene>
    <name evidence="1" type="primary">rny</name>
    <name type="ordered locus">GK1297</name>
</gene>
<sequence length="518" mass="58203">MGSIIISALLALVIGAVVGFFVRKSIAEAKIGGAKAAAEQLIEEAKREADALKKEALLEAKDEIHKLRTEAERDIRDRRSELQKQENRLMQKEENLDRKDEALNKREALLEAKEEALNERQQHIEQMESKVEALVKQQQAELERISGLTRDDARQLILERVEKELSHEIAMMIKEAETRAKEEADKRAKAILSLAIQRCAADHVAETTVSVVNLPNDEMKGRIIGREGRNIRTLETLTGIDLIIDDTPEAVILSGFDPIRRETARIALDKLVQDGRIHPARIEEMVEKARREVDEHIREVGEQTTFEVGVHGLHPDLIKILGRLKFRTSYGQNVLKHSVEVAFLAGLMAAELGEDEMLARRAGLLHDIGKAIDHEVEGSHVEIGVELATKYKEHPVVINSIASHHGDTEPTSVIAVLVAAADALSAARPGARSETLENYIRRLEKLEEIAESYEGVEKSYAIQAGREVRIMVKPDMIDDLEAHRLARDIRKRIEEELDYPGHIKVTVIRETRAVEYAK</sequence>
<protein>
    <recommendedName>
        <fullName evidence="1">Ribonuclease Y</fullName>
        <shortName evidence="1">RNase Y</shortName>
        <ecNumber evidence="1">3.1.-.-</ecNumber>
    </recommendedName>
</protein>
<organism>
    <name type="scientific">Geobacillus kaustophilus (strain HTA426)</name>
    <dbReference type="NCBI Taxonomy" id="235909"/>
    <lineage>
        <taxon>Bacteria</taxon>
        <taxon>Bacillati</taxon>
        <taxon>Bacillota</taxon>
        <taxon>Bacilli</taxon>
        <taxon>Bacillales</taxon>
        <taxon>Anoxybacillaceae</taxon>
        <taxon>Geobacillus</taxon>
        <taxon>Geobacillus thermoleovorans group</taxon>
    </lineage>
</organism>
<dbReference type="EC" id="3.1.-.-" evidence="1"/>
<dbReference type="EMBL" id="BA000043">
    <property type="protein sequence ID" value="BAD75582.1"/>
    <property type="molecule type" value="Genomic_DNA"/>
</dbReference>
<dbReference type="RefSeq" id="WP_011230797.1">
    <property type="nucleotide sequence ID" value="NC_006510.1"/>
</dbReference>
<dbReference type="SMR" id="Q5L0F4"/>
<dbReference type="STRING" id="235909.GK1297"/>
<dbReference type="GeneID" id="32063192"/>
<dbReference type="KEGG" id="gka:GK1297"/>
<dbReference type="eggNOG" id="COG1418">
    <property type="taxonomic scope" value="Bacteria"/>
</dbReference>
<dbReference type="HOGENOM" id="CLU_028328_1_0_9"/>
<dbReference type="Proteomes" id="UP000001172">
    <property type="component" value="Chromosome"/>
</dbReference>
<dbReference type="GO" id="GO:0005886">
    <property type="term" value="C:plasma membrane"/>
    <property type="evidence" value="ECO:0007669"/>
    <property type="project" value="UniProtKB-SubCell"/>
</dbReference>
<dbReference type="GO" id="GO:0003723">
    <property type="term" value="F:RNA binding"/>
    <property type="evidence" value="ECO:0007669"/>
    <property type="project" value="UniProtKB-UniRule"/>
</dbReference>
<dbReference type="GO" id="GO:0004521">
    <property type="term" value="F:RNA endonuclease activity"/>
    <property type="evidence" value="ECO:0007669"/>
    <property type="project" value="UniProtKB-UniRule"/>
</dbReference>
<dbReference type="GO" id="GO:0006402">
    <property type="term" value="P:mRNA catabolic process"/>
    <property type="evidence" value="ECO:0007669"/>
    <property type="project" value="UniProtKB-UniRule"/>
</dbReference>
<dbReference type="CDD" id="cd00077">
    <property type="entry name" value="HDc"/>
    <property type="match status" value="1"/>
</dbReference>
<dbReference type="CDD" id="cd22431">
    <property type="entry name" value="KH-I_RNaseY"/>
    <property type="match status" value="1"/>
</dbReference>
<dbReference type="FunFam" id="1.10.3210.10:FF:000003">
    <property type="entry name" value="Ribonuclease Y"/>
    <property type="match status" value="1"/>
</dbReference>
<dbReference type="FunFam" id="3.30.1370.10:FF:000006">
    <property type="entry name" value="Ribonuclease Y"/>
    <property type="match status" value="1"/>
</dbReference>
<dbReference type="Gene3D" id="1.10.3210.10">
    <property type="entry name" value="Hypothetical protein af1432"/>
    <property type="match status" value="1"/>
</dbReference>
<dbReference type="Gene3D" id="3.30.1370.10">
    <property type="entry name" value="K Homology domain, type 1"/>
    <property type="match status" value="1"/>
</dbReference>
<dbReference type="HAMAP" id="MF_00335">
    <property type="entry name" value="RNase_Y"/>
    <property type="match status" value="1"/>
</dbReference>
<dbReference type="InterPro" id="IPR003607">
    <property type="entry name" value="HD/PDEase_dom"/>
</dbReference>
<dbReference type="InterPro" id="IPR006674">
    <property type="entry name" value="HD_domain"/>
</dbReference>
<dbReference type="InterPro" id="IPR006675">
    <property type="entry name" value="HDIG_dom"/>
</dbReference>
<dbReference type="InterPro" id="IPR004087">
    <property type="entry name" value="KH_dom"/>
</dbReference>
<dbReference type="InterPro" id="IPR004088">
    <property type="entry name" value="KH_dom_type_1"/>
</dbReference>
<dbReference type="InterPro" id="IPR036612">
    <property type="entry name" value="KH_dom_type_1_sf"/>
</dbReference>
<dbReference type="InterPro" id="IPR017705">
    <property type="entry name" value="Ribonuclease_Y"/>
</dbReference>
<dbReference type="InterPro" id="IPR022711">
    <property type="entry name" value="RNase_Y_N"/>
</dbReference>
<dbReference type="NCBIfam" id="TIGR00277">
    <property type="entry name" value="HDIG"/>
    <property type="match status" value="1"/>
</dbReference>
<dbReference type="NCBIfam" id="TIGR03319">
    <property type="entry name" value="RNase_Y"/>
    <property type="match status" value="1"/>
</dbReference>
<dbReference type="PANTHER" id="PTHR12826">
    <property type="entry name" value="RIBONUCLEASE Y"/>
    <property type="match status" value="1"/>
</dbReference>
<dbReference type="PANTHER" id="PTHR12826:SF15">
    <property type="entry name" value="RIBONUCLEASE Y"/>
    <property type="match status" value="1"/>
</dbReference>
<dbReference type="Pfam" id="PF01966">
    <property type="entry name" value="HD"/>
    <property type="match status" value="1"/>
</dbReference>
<dbReference type="Pfam" id="PF00013">
    <property type="entry name" value="KH_1"/>
    <property type="match status" value="1"/>
</dbReference>
<dbReference type="Pfam" id="PF12072">
    <property type="entry name" value="RNase_Y_N"/>
    <property type="match status" value="1"/>
</dbReference>
<dbReference type="SMART" id="SM00471">
    <property type="entry name" value="HDc"/>
    <property type="match status" value="1"/>
</dbReference>
<dbReference type="SMART" id="SM00322">
    <property type="entry name" value="KH"/>
    <property type="match status" value="1"/>
</dbReference>
<dbReference type="SUPFAM" id="SSF54791">
    <property type="entry name" value="Eukaryotic type KH-domain (KH-domain type I)"/>
    <property type="match status" value="1"/>
</dbReference>
<dbReference type="SUPFAM" id="SSF109604">
    <property type="entry name" value="HD-domain/PDEase-like"/>
    <property type="match status" value="1"/>
</dbReference>
<dbReference type="PROSITE" id="PS51831">
    <property type="entry name" value="HD"/>
    <property type="match status" value="1"/>
</dbReference>
<dbReference type="PROSITE" id="PS50084">
    <property type="entry name" value="KH_TYPE_1"/>
    <property type="match status" value="1"/>
</dbReference>
<reference key="1">
    <citation type="journal article" date="2004" name="Nucleic Acids Res.">
        <title>Thermoadaptation trait revealed by the genome sequence of thermophilic Geobacillus kaustophilus.</title>
        <authorList>
            <person name="Takami H."/>
            <person name="Takaki Y."/>
            <person name="Chee G.-J."/>
            <person name="Nishi S."/>
            <person name="Shimamura S."/>
            <person name="Suzuki H."/>
            <person name="Matsui S."/>
            <person name="Uchiyama I."/>
        </authorList>
    </citation>
    <scope>NUCLEOTIDE SEQUENCE [LARGE SCALE GENOMIC DNA]</scope>
    <source>
        <strain>HTA426</strain>
    </source>
</reference>
<comment type="function">
    <text evidence="1">Endoribonuclease that initiates mRNA decay.</text>
</comment>
<comment type="subcellular location">
    <subcellularLocation>
        <location evidence="1">Cell membrane</location>
        <topology evidence="1">Single-pass membrane protein</topology>
    </subcellularLocation>
</comment>
<comment type="similarity">
    <text evidence="1">Belongs to the RNase Y family.</text>
</comment>
<keyword id="KW-1003">Cell membrane</keyword>
<keyword id="KW-0255">Endonuclease</keyword>
<keyword id="KW-0378">Hydrolase</keyword>
<keyword id="KW-0472">Membrane</keyword>
<keyword id="KW-0540">Nuclease</keyword>
<keyword id="KW-1185">Reference proteome</keyword>
<keyword id="KW-0694">RNA-binding</keyword>
<keyword id="KW-0812">Transmembrane</keyword>
<keyword id="KW-1133">Transmembrane helix</keyword>
<proteinExistence type="inferred from homology"/>
<feature type="chain" id="PRO_0000344879" description="Ribonuclease Y">
    <location>
        <begin position="1"/>
        <end position="518"/>
    </location>
</feature>
<feature type="transmembrane region" description="Helical" evidence="1">
    <location>
        <begin position="2"/>
        <end position="22"/>
    </location>
</feature>
<feature type="domain" description="KH" evidence="1">
    <location>
        <begin position="208"/>
        <end position="271"/>
    </location>
</feature>
<feature type="domain" description="HD" evidence="2">
    <location>
        <begin position="334"/>
        <end position="427"/>
    </location>
</feature>
<name>RNY_GEOKA</name>